<proteinExistence type="evidence at protein level"/>
<gene>
    <name type="primary">NPPC</name>
    <name type="synonym">CNP</name>
</gene>
<protein>
    <recommendedName>
        <fullName>C-type natriuretic peptide</fullName>
    </recommendedName>
    <component>
        <recommendedName>
            <fullName>CNP-22</fullName>
        </recommendedName>
    </component>
    <component>
        <recommendedName>
            <fullName>CNP-29</fullName>
        </recommendedName>
    </component>
    <component>
        <recommendedName>
            <fullName>CNP-53</fullName>
        </recommendedName>
    </component>
</protein>
<accession>P18104</accession>
<accession>P21806</accession>
<dbReference type="EMBL" id="M64758">
    <property type="protein sequence ID" value="AAA31018.1"/>
    <property type="molecule type" value="Genomic_DNA"/>
</dbReference>
<dbReference type="PIR" id="A36155">
    <property type="entry name" value="A36155"/>
</dbReference>
<dbReference type="RefSeq" id="NP_001008482.1">
    <property type="nucleotide sequence ID" value="NM_001008482.1"/>
</dbReference>
<dbReference type="RefSeq" id="XP_005672336.1">
    <property type="nucleotide sequence ID" value="XM_005672279.2"/>
</dbReference>
<dbReference type="FunCoup" id="P18104">
    <property type="interactions" value="81"/>
</dbReference>
<dbReference type="STRING" id="9823.ENSSSCP00000022217"/>
<dbReference type="PaxDb" id="9823-ENSSSCP00000022217"/>
<dbReference type="Ensembl" id="ENSSSCT00000028969.2">
    <property type="protein sequence ID" value="ENSSSCP00000022217.1"/>
    <property type="gene ID" value="ENSSSCG00000026852.3"/>
</dbReference>
<dbReference type="Ensembl" id="ENSSSCT00015018952.1">
    <property type="protein sequence ID" value="ENSSSCP00015007436.1"/>
    <property type="gene ID" value="ENSSSCG00015014287.1"/>
</dbReference>
<dbReference type="Ensembl" id="ENSSSCT00025005802.1">
    <property type="protein sequence ID" value="ENSSSCP00025002310.1"/>
    <property type="gene ID" value="ENSSSCG00025004345.1"/>
</dbReference>
<dbReference type="Ensembl" id="ENSSSCT00030057887.1">
    <property type="protein sequence ID" value="ENSSSCP00030026352.1"/>
    <property type="gene ID" value="ENSSSCG00030041644.1"/>
</dbReference>
<dbReference type="Ensembl" id="ENSSSCT00035094585.1">
    <property type="protein sequence ID" value="ENSSSCP00035039727.1"/>
    <property type="gene ID" value="ENSSSCG00035070028.1"/>
</dbReference>
<dbReference type="Ensembl" id="ENSSSCT00040058920.1">
    <property type="protein sequence ID" value="ENSSSCP00040024672.1"/>
    <property type="gene ID" value="ENSSSCG00040043932.1"/>
</dbReference>
<dbReference type="Ensembl" id="ENSSSCT00045010609.1">
    <property type="protein sequence ID" value="ENSSSCP00045007227.1"/>
    <property type="gene ID" value="ENSSSCG00045006394.1"/>
</dbReference>
<dbReference type="Ensembl" id="ENSSSCT00050040183.1">
    <property type="protein sequence ID" value="ENSSSCP00050016630.1"/>
    <property type="gene ID" value="ENSSSCG00050029879.1"/>
</dbReference>
<dbReference type="Ensembl" id="ENSSSCT00055042421.1">
    <property type="protein sequence ID" value="ENSSSCP00055033776.1"/>
    <property type="gene ID" value="ENSSSCG00055021594.1"/>
</dbReference>
<dbReference type="Ensembl" id="ENSSSCT00060063698.1">
    <property type="protein sequence ID" value="ENSSSCP00060027337.1"/>
    <property type="gene ID" value="ENSSSCG00060046901.1"/>
</dbReference>
<dbReference type="Ensembl" id="ENSSSCT00065085310.1">
    <property type="protein sequence ID" value="ENSSSCP00065037277.1"/>
    <property type="gene ID" value="ENSSSCG00065062196.1"/>
</dbReference>
<dbReference type="Ensembl" id="ENSSSCT00070017167.1">
    <property type="protein sequence ID" value="ENSSSCP00070014204.1"/>
    <property type="gene ID" value="ENSSSCG00070008864.1"/>
</dbReference>
<dbReference type="Ensembl" id="ENSSSCT00085011426">
    <property type="protein sequence ID" value="ENSSSCP00085008201"/>
    <property type="gene ID" value="ENSSSCG00085006128"/>
</dbReference>
<dbReference type="Ensembl" id="ENSSSCT00090057783">
    <property type="protein sequence ID" value="ENSSSCP00090036036"/>
    <property type="gene ID" value="ENSSSCG00090032678"/>
</dbReference>
<dbReference type="Ensembl" id="ENSSSCT00105076182">
    <property type="protein sequence ID" value="ENSSSCP00105053957"/>
    <property type="gene ID" value="ENSSSCG00105039960"/>
</dbReference>
<dbReference type="Ensembl" id="ENSSSCT00110065609">
    <property type="protein sequence ID" value="ENSSSCP00110046098"/>
    <property type="gene ID" value="ENSSSCG00110034502"/>
</dbReference>
<dbReference type="Ensembl" id="ENSSSCT00115002257">
    <property type="protein sequence ID" value="ENSSSCP00115002110"/>
    <property type="gene ID" value="ENSSSCG00115001335"/>
</dbReference>
<dbReference type="Ensembl" id="ENSSSCT00130059761">
    <property type="protein sequence ID" value="ENSSSCP00130042828"/>
    <property type="gene ID" value="ENSSSCG00130030633"/>
</dbReference>
<dbReference type="GeneID" id="493772"/>
<dbReference type="KEGG" id="ssc:493772"/>
<dbReference type="CTD" id="4880"/>
<dbReference type="VGNC" id="VGNC:96450">
    <property type="gene designation" value="NPPC"/>
</dbReference>
<dbReference type="eggNOG" id="ENOG502S2QY">
    <property type="taxonomic scope" value="Eukaryota"/>
</dbReference>
<dbReference type="GeneTree" id="ENSGT00390000015492"/>
<dbReference type="HOGENOM" id="CLU_160791_0_0_1"/>
<dbReference type="InParanoid" id="P18104"/>
<dbReference type="OMA" id="HDYPNAR"/>
<dbReference type="OrthoDB" id="8911465at2759"/>
<dbReference type="TreeFam" id="TF106305"/>
<dbReference type="Reactome" id="R-SSC-5578768">
    <property type="pathway name" value="Physiological factors"/>
</dbReference>
<dbReference type="Proteomes" id="UP000008227">
    <property type="component" value="Chromosome 15"/>
</dbReference>
<dbReference type="Proteomes" id="UP000314985">
    <property type="component" value="Chromosome 15"/>
</dbReference>
<dbReference type="Proteomes" id="UP000694570">
    <property type="component" value="Unplaced"/>
</dbReference>
<dbReference type="Proteomes" id="UP000694571">
    <property type="component" value="Unplaced"/>
</dbReference>
<dbReference type="Proteomes" id="UP000694720">
    <property type="component" value="Unplaced"/>
</dbReference>
<dbReference type="Proteomes" id="UP000694722">
    <property type="component" value="Unplaced"/>
</dbReference>
<dbReference type="Proteomes" id="UP000694723">
    <property type="component" value="Unplaced"/>
</dbReference>
<dbReference type="Proteomes" id="UP000694724">
    <property type="component" value="Unplaced"/>
</dbReference>
<dbReference type="Proteomes" id="UP000694725">
    <property type="component" value="Unplaced"/>
</dbReference>
<dbReference type="Proteomes" id="UP000694726">
    <property type="component" value="Unplaced"/>
</dbReference>
<dbReference type="Proteomes" id="UP000694727">
    <property type="component" value="Unplaced"/>
</dbReference>
<dbReference type="Proteomes" id="UP000694728">
    <property type="component" value="Unplaced"/>
</dbReference>
<dbReference type="Bgee" id="ENSSSCG00000026852">
    <property type="expression patterns" value="Expressed in endocardial endothelium and 16 other cell types or tissues"/>
</dbReference>
<dbReference type="GO" id="GO:0005576">
    <property type="term" value="C:extracellular region"/>
    <property type="evidence" value="ECO:0007669"/>
    <property type="project" value="UniProtKB-SubCell"/>
</dbReference>
<dbReference type="GO" id="GO:0032991">
    <property type="term" value="C:protein-containing complex"/>
    <property type="evidence" value="ECO:0007669"/>
    <property type="project" value="Ensembl"/>
</dbReference>
<dbReference type="GO" id="GO:0005179">
    <property type="term" value="F:hormone activity"/>
    <property type="evidence" value="ECO:0000318"/>
    <property type="project" value="GO_Central"/>
</dbReference>
<dbReference type="GO" id="GO:0051427">
    <property type="term" value="F:hormone receptor binding"/>
    <property type="evidence" value="ECO:0000318"/>
    <property type="project" value="GO_Central"/>
</dbReference>
<dbReference type="GO" id="GO:0005102">
    <property type="term" value="F:signaling receptor binding"/>
    <property type="evidence" value="ECO:0000250"/>
    <property type="project" value="AgBase"/>
</dbReference>
<dbReference type="GO" id="GO:0001525">
    <property type="term" value="P:angiogenesis"/>
    <property type="evidence" value="ECO:0007669"/>
    <property type="project" value="Ensembl"/>
</dbReference>
<dbReference type="GO" id="GO:0097746">
    <property type="term" value="P:blood vessel diameter maintenance"/>
    <property type="evidence" value="ECO:0007669"/>
    <property type="project" value="UniProtKB-KW"/>
</dbReference>
<dbReference type="GO" id="GO:0001974">
    <property type="term" value="P:blood vessel remodeling"/>
    <property type="evidence" value="ECO:0007669"/>
    <property type="project" value="Ensembl"/>
</dbReference>
<dbReference type="GO" id="GO:0061939">
    <property type="term" value="P:c-di-GMP signaling"/>
    <property type="evidence" value="ECO:0007669"/>
    <property type="project" value="Ensembl"/>
</dbReference>
<dbReference type="GO" id="GO:1904588">
    <property type="term" value="P:cellular response to glycoprotein"/>
    <property type="evidence" value="ECO:0007669"/>
    <property type="project" value="Ensembl"/>
</dbReference>
<dbReference type="GO" id="GO:0006182">
    <property type="term" value="P:cGMP biosynthetic process"/>
    <property type="evidence" value="ECO:0000250"/>
    <property type="project" value="UniProtKB"/>
</dbReference>
<dbReference type="GO" id="GO:0051276">
    <property type="term" value="P:chromosome organization"/>
    <property type="evidence" value="ECO:0007669"/>
    <property type="project" value="Ensembl"/>
</dbReference>
<dbReference type="GO" id="GO:0001549">
    <property type="term" value="P:cumulus cell differentiation"/>
    <property type="evidence" value="ECO:0007669"/>
    <property type="project" value="Ensembl"/>
</dbReference>
<dbReference type="GO" id="GO:0035483">
    <property type="term" value="P:gastric emptying"/>
    <property type="evidence" value="ECO:0007669"/>
    <property type="project" value="Ensembl"/>
</dbReference>
<dbReference type="GO" id="GO:0003418">
    <property type="term" value="P:growth plate cartilage chondrocyte differentiation"/>
    <property type="evidence" value="ECO:0000250"/>
    <property type="project" value="UniProtKB"/>
</dbReference>
<dbReference type="GO" id="GO:0003419">
    <property type="term" value="P:growth plate cartilage chondrocyte proliferation"/>
    <property type="evidence" value="ECO:0000250"/>
    <property type="project" value="UniProtKB"/>
</dbReference>
<dbReference type="GO" id="GO:0006874">
    <property type="term" value="P:intracellular calcium ion homeostasis"/>
    <property type="evidence" value="ECO:0007669"/>
    <property type="project" value="Ensembl"/>
</dbReference>
<dbReference type="GO" id="GO:1903537">
    <property type="term" value="P:meiotic cell cycle process involved in oocyte maturation"/>
    <property type="evidence" value="ECO:0007669"/>
    <property type="project" value="Ensembl"/>
</dbReference>
<dbReference type="GO" id="GO:0071965">
    <property type="term" value="P:multicellular organismal locomotion"/>
    <property type="evidence" value="ECO:0007669"/>
    <property type="project" value="Ensembl"/>
</dbReference>
<dbReference type="GO" id="GO:0051447">
    <property type="term" value="P:negative regulation of meiotic cell cycle"/>
    <property type="evidence" value="ECO:0007669"/>
    <property type="project" value="Ensembl"/>
</dbReference>
<dbReference type="GO" id="GO:0043524">
    <property type="term" value="P:negative regulation of neuron apoptotic process"/>
    <property type="evidence" value="ECO:0007669"/>
    <property type="project" value="Ensembl"/>
</dbReference>
<dbReference type="GO" id="GO:1900194">
    <property type="term" value="P:negative regulation of oocyte maturation"/>
    <property type="evidence" value="ECO:0007669"/>
    <property type="project" value="Ensembl"/>
</dbReference>
<dbReference type="GO" id="GO:0001503">
    <property type="term" value="P:ossification"/>
    <property type="evidence" value="ECO:0007669"/>
    <property type="project" value="UniProtKB-KW"/>
</dbReference>
<dbReference type="GO" id="GO:0009791">
    <property type="term" value="P:post-embryonic development"/>
    <property type="evidence" value="ECO:0007669"/>
    <property type="project" value="Ensembl"/>
</dbReference>
<dbReference type="GO" id="GO:0006457">
    <property type="term" value="P:protein folding"/>
    <property type="evidence" value="ECO:0007669"/>
    <property type="project" value="Ensembl"/>
</dbReference>
<dbReference type="GO" id="GO:0007168">
    <property type="term" value="P:receptor guanylyl cyclase signaling pathway"/>
    <property type="evidence" value="ECO:0000250"/>
    <property type="project" value="UniProtKB"/>
</dbReference>
<dbReference type="GO" id="GO:0040014">
    <property type="term" value="P:regulation of multicellular organism growth"/>
    <property type="evidence" value="ECO:0007669"/>
    <property type="project" value="Ensembl"/>
</dbReference>
<dbReference type="GO" id="GO:0048678">
    <property type="term" value="P:response to axon injury"/>
    <property type="evidence" value="ECO:0007669"/>
    <property type="project" value="Ensembl"/>
</dbReference>
<dbReference type="GO" id="GO:0002931">
    <property type="term" value="P:response to ischemia"/>
    <property type="evidence" value="ECO:0007669"/>
    <property type="project" value="Ensembl"/>
</dbReference>
<dbReference type="GO" id="GO:0090649">
    <property type="term" value="P:response to oxygen-glucose deprivation"/>
    <property type="evidence" value="ECO:0007669"/>
    <property type="project" value="Ensembl"/>
</dbReference>
<dbReference type="InterPro" id="IPR002406">
    <property type="entry name" value="C_natriurtcpep"/>
</dbReference>
<dbReference type="InterPro" id="IPR000663">
    <property type="entry name" value="Natr_peptide"/>
</dbReference>
<dbReference type="InterPro" id="IPR030480">
    <property type="entry name" value="Natr_peptide_CS"/>
</dbReference>
<dbReference type="PANTHER" id="PTHR12167">
    <property type="entry name" value="C-TYPE NATRIURETIC PEPTIDE"/>
    <property type="match status" value="1"/>
</dbReference>
<dbReference type="PANTHER" id="PTHR12167:SF2">
    <property type="entry name" value="C-TYPE NATRIURETIC PEPTIDE"/>
    <property type="match status" value="1"/>
</dbReference>
<dbReference type="Pfam" id="PF00212">
    <property type="entry name" value="ANP"/>
    <property type="match status" value="1"/>
</dbReference>
<dbReference type="PRINTS" id="PR00713">
    <property type="entry name" value="CNATPEPTIDE"/>
</dbReference>
<dbReference type="PRINTS" id="PR00710">
    <property type="entry name" value="NATPEPTIDES"/>
</dbReference>
<dbReference type="SMART" id="SM00183">
    <property type="entry name" value="NAT_PEP"/>
    <property type="match status" value="1"/>
</dbReference>
<dbReference type="PROSITE" id="PS00263">
    <property type="entry name" value="NATRIURETIC_PEPTIDE"/>
    <property type="match status" value="1"/>
</dbReference>
<comment type="function">
    <molecule>CNP-22</molecule>
    <text evidence="2 3">Hormone which plays a role in endochondral ossification through regulation of cartilaginous growth plate chondrocytes proliferation and differentiation (By similarity). May also be vasoactive and natriuretic. Acts by specifically binding and stimulating NPR2 to produce cGMP. Binds the clearance receptor NPR3 (By similarity).</text>
</comment>
<comment type="subcellular location">
    <subcellularLocation>
        <location>Secreted</location>
    </subcellularLocation>
</comment>
<comment type="PTM">
    <molecule>CNP-22</molecule>
    <text evidence="2">Degraded by IDE (in vitro).</text>
</comment>
<comment type="similarity">
    <text evidence="7">Belongs to the natriuretic peptide family.</text>
</comment>
<name>ANFC_PIG</name>
<evidence type="ECO:0000250" key="1"/>
<evidence type="ECO:0000250" key="2">
    <source>
        <dbReference type="UniProtKB" id="P23582"/>
    </source>
</evidence>
<evidence type="ECO:0000250" key="3">
    <source>
        <dbReference type="UniProtKB" id="Q61839"/>
    </source>
</evidence>
<evidence type="ECO:0000255" key="4"/>
<evidence type="ECO:0000256" key="5">
    <source>
        <dbReference type="SAM" id="MobiDB-lite"/>
    </source>
</evidence>
<evidence type="ECO:0000269" key="6">
    <source>
    </source>
</evidence>
<evidence type="ECO:0000305" key="7"/>
<reference key="1">
    <citation type="journal article" date="1990" name="Biochem. Biophys. Res. Commun.">
        <title>Gene and precursor structure of porcine C-type natriuretic peptide.</title>
        <authorList>
            <person name="Tawaragi Y."/>
            <person name="Fuchimura K."/>
            <person name="Nakazato H."/>
            <person name="Tanaka S."/>
            <person name="Minamino N."/>
            <person name="Kangawa K."/>
            <person name="Matsuo H."/>
        </authorList>
    </citation>
    <scope>NUCLEOTIDE SEQUENCE [GENOMIC DNA]</scope>
</reference>
<reference key="2">
    <citation type="journal article" date="1990" name="Biochem. Biophys. Res. Commun.">
        <title>N-terminally extended form of C-type natriuretic peptide (CNP-53) identified in porcine brain.</title>
        <authorList>
            <person name="Minamino N."/>
            <person name="Kangawa K."/>
            <person name="Matsuo H."/>
        </authorList>
    </citation>
    <scope>PROTEIN SEQUENCE OF 74-126</scope>
    <source>
        <tissue>Brain</tissue>
    </source>
</reference>
<reference key="3">
    <citation type="journal article" date="1990" name="Biochem. Biophys. Res. Commun.">
        <title>C-type natriuretic peptide (CNP): a new member of natriuretic peptide family identified in porcine brain.</title>
        <authorList>
            <person name="Sudoh T."/>
            <person name="Minamino N."/>
            <person name="Kangawa K."/>
            <person name="Matsuo H."/>
        </authorList>
    </citation>
    <scope>PROTEIN SEQUENCE OF 105-126</scope>
    <source>
        <tissue>Brain</tissue>
    </source>
</reference>
<organism>
    <name type="scientific">Sus scrofa</name>
    <name type="common">Pig</name>
    <dbReference type="NCBI Taxonomy" id="9823"/>
    <lineage>
        <taxon>Eukaryota</taxon>
        <taxon>Metazoa</taxon>
        <taxon>Chordata</taxon>
        <taxon>Craniata</taxon>
        <taxon>Vertebrata</taxon>
        <taxon>Euteleostomi</taxon>
        <taxon>Mammalia</taxon>
        <taxon>Eutheria</taxon>
        <taxon>Laurasiatheria</taxon>
        <taxon>Artiodactyla</taxon>
        <taxon>Suina</taxon>
        <taxon>Suidae</taxon>
        <taxon>Sus</taxon>
    </lineage>
</organism>
<sequence>MHLSQLLACALLLTLLSLRPSEAKPGAPPKVPRTPPGEEVAEPQAAGGGQKKGDKTPGGGGANLKGDRSRLLRDLRVDTKSRAAWARLLHEHPNARKYKGGNKKGLSKGCFGLKLDRIGSMSGLGC</sequence>
<keyword id="KW-0165">Cleavage on pair of basic residues</keyword>
<keyword id="KW-0903">Direct protein sequencing</keyword>
<keyword id="KW-1015">Disulfide bond</keyword>
<keyword id="KW-0372">Hormone</keyword>
<keyword id="KW-0892">Osteogenesis</keyword>
<keyword id="KW-1185">Reference proteome</keyword>
<keyword id="KW-0964">Secreted</keyword>
<keyword id="KW-0732">Signal</keyword>
<keyword id="KW-0838">Vasoactive</keyword>
<feature type="signal peptide" evidence="4">
    <location>
        <begin position="1"/>
        <end position="23"/>
    </location>
</feature>
<feature type="propeptide" id="PRO_0000001561" evidence="6">
    <location>
        <begin position="24"/>
        <end position="73"/>
    </location>
</feature>
<feature type="peptide" id="PRO_0000001562" description="CNP-53">
    <location>
        <begin position="74"/>
        <end position="126"/>
    </location>
</feature>
<feature type="peptide" id="PRO_0000001563" description="CNP-29" evidence="1">
    <location>
        <begin position="98"/>
        <end position="126"/>
    </location>
</feature>
<feature type="peptide" id="PRO_0000001564" description="CNP-22">
    <location>
        <begin position="105"/>
        <end position="126"/>
    </location>
</feature>
<feature type="region of interest" description="Disordered" evidence="5">
    <location>
        <begin position="19"/>
        <end position="72"/>
    </location>
</feature>
<feature type="compositionally biased region" description="Pro residues" evidence="5">
    <location>
        <begin position="26"/>
        <end position="35"/>
    </location>
</feature>
<feature type="compositionally biased region" description="Gly residues" evidence="5">
    <location>
        <begin position="46"/>
        <end position="63"/>
    </location>
</feature>
<feature type="disulfide bond">
    <location>
        <begin position="110"/>
        <end position="126"/>
    </location>
</feature>